<proteinExistence type="inferred from homology"/>
<accession>A2CC44</accession>
<protein>
    <recommendedName>
        <fullName evidence="1">Small ribosomal subunit protein uS5</fullName>
    </recommendedName>
    <alternativeName>
        <fullName evidence="3">30S ribosomal protein S5</fullName>
    </alternativeName>
</protein>
<comment type="function">
    <text evidence="1">With S4 and S12 plays an important role in translational accuracy.</text>
</comment>
<comment type="function">
    <text evidence="1">Located at the back of the 30S subunit body where it stabilizes the conformation of the head with respect to the body.</text>
</comment>
<comment type="subunit">
    <text evidence="1">Part of the 30S ribosomal subunit. Contacts proteins S4 and S8.</text>
</comment>
<comment type="domain">
    <text>The N-terminal domain interacts with the head of the 30S subunit; the C-terminal domain interacts with the body and contacts protein S4. The interaction surface between S4 and S5 is involved in control of translational fidelity.</text>
</comment>
<comment type="similarity">
    <text evidence="1">Belongs to the universal ribosomal protein uS5 family.</text>
</comment>
<gene>
    <name evidence="1" type="primary">rpsE</name>
    <name evidence="1" type="synonym">rps5</name>
    <name type="ordered locus">P9303_23191</name>
</gene>
<keyword id="KW-0687">Ribonucleoprotein</keyword>
<keyword id="KW-0689">Ribosomal protein</keyword>
<keyword id="KW-0694">RNA-binding</keyword>
<keyword id="KW-0699">rRNA-binding</keyword>
<name>RS5_PROM3</name>
<evidence type="ECO:0000255" key="1">
    <source>
        <dbReference type="HAMAP-Rule" id="MF_01307"/>
    </source>
</evidence>
<evidence type="ECO:0000256" key="2">
    <source>
        <dbReference type="SAM" id="MobiDB-lite"/>
    </source>
</evidence>
<evidence type="ECO:0000305" key="3"/>
<feature type="chain" id="PRO_1000086039" description="Small ribosomal subunit protein uS5">
    <location>
        <begin position="1"/>
        <end position="210"/>
    </location>
</feature>
<feature type="domain" description="S5 DRBM" evidence="1">
    <location>
        <begin position="54"/>
        <end position="117"/>
    </location>
</feature>
<feature type="region of interest" description="Disordered" evidence="2">
    <location>
        <begin position="1"/>
        <end position="56"/>
    </location>
</feature>
<feature type="compositionally biased region" description="Polar residues" evidence="2">
    <location>
        <begin position="1"/>
        <end position="11"/>
    </location>
</feature>
<feature type="compositionally biased region" description="Low complexity" evidence="2">
    <location>
        <begin position="18"/>
        <end position="29"/>
    </location>
</feature>
<feature type="compositionally biased region" description="Basic and acidic residues" evidence="2">
    <location>
        <begin position="32"/>
        <end position="56"/>
    </location>
</feature>
<organism>
    <name type="scientific">Prochlorococcus marinus (strain MIT 9303)</name>
    <dbReference type="NCBI Taxonomy" id="59922"/>
    <lineage>
        <taxon>Bacteria</taxon>
        <taxon>Bacillati</taxon>
        <taxon>Cyanobacteriota</taxon>
        <taxon>Cyanophyceae</taxon>
        <taxon>Synechococcales</taxon>
        <taxon>Prochlorococcaceae</taxon>
        <taxon>Prochlorococcus</taxon>
    </lineage>
</organism>
<sequence length="210" mass="22454">MTQPNTQTTPNDVPAAAEGQHQEQQQQQRRGGGRERRGGGRRGDRRGQERDSEWQERVVQIRRVSKTVKGGKKMSFRAIVVVGNERGQVGVGVGKAGDVIGAVRKGVADGKKHLVKVPLTRHNSIPTLSNGREGAANVLIRPAAPGTGVIAGGSIRTVLELAGIKNVLAKRLGSKTPLNNARAAMVALASLRTHKETAKERGISLEQIYS</sequence>
<dbReference type="EMBL" id="CP000554">
    <property type="protein sequence ID" value="ABM79054.1"/>
    <property type="molecule type" value="Genomic_DNA"/>
</dbReference>
<dbReference type="RefSeq" id="WP_011826920.1">
    <property type="nucleotide sequence ID" value="NC_008820.1"/>
</dbReference>
<dbReference type="SMR" id="A2CC44"/>
<dbReference type="STRING" id="59922.P9303_23191"/>
<dbReference type="KEGG" id="pmf:P9303_23191"/>
<dbReference type="HOGENOM" id="CLU_065898_2_1_3"/>
<dbReference type="BioCyc" id="PMAR59922:G1G80-2035-MONOMER"/>
<dbReference type="Proteomes" id="UP000002274">
    <property type="component" value="Chromosome"/>
</dbReference>
<dbReference type="GO" id="GO:0015935">
    <property type="term" value="C:small ribosomal subunit"/>
    <property type="evidence" value="ECO:0007669"/>
    <property type="project" value="InterPro"/>
</dbReference>
<dbReference type="GO" id="GO:0019843">
    <property type="term" value="F:rRNA binding"/>
    <property type="evidence" value="ECO:0007669"/>
    <property type="project" value="UniProtKB-UniRule"/>
</dbReference>
<dbReference type="GO" id="GO:0003735">
    <property type="term" value="F:structural constituent of ribosome"/>
    <property type="evidence" value="ECO:0007669"/>
    <property type="project" value="InterPro"/>
</dbReference>
<dbReference type="GO" id="GO:0006412">
    <property type="term" value="P:translation"/>
    <property type="evidence" value="ECO:0007669"/>
    <property type="project" value="UniProtKB-UniRule"/>
</dbReference>
<dbReference type="FunFam" id="3.30.230.10:FF:000002">
    <property type="entry name" value="30S ribosomal protein S5"/>
    <property type="match status" value="1"/>
</dbReference>
<dbReference type="Gene3D" id="3.30.160.20">
    <property type="match status" value="1"/>
</dbReference>
<dbReference type="Gene3D" id="3.30.230.10">
    <property type="match status" value="1"/>
</dbReference>
<dbReference type="HAMAP" id="MF_01307_B">
    <property type="entry name" value="Ribosomal_uS5_B"/>
    <property type="match status" value="1"/>
</dbReference>
<dbReference type="InterPro" id="IPR020568">
    <property type="entry name" value="Ribosomal_Su5_D2-typ_SF"/>
</dbReference>
<dbReference type="InterPro" id="IPR000851">
    <property type="entry name" value="Ribosomal_uS5"/>
</dbReference>
<dbReference type="InterPro" id="IPR005712">
    <property type="entry name" value="Ribosomal_uS5_bac-type"/>
</dbReference>
<dbReference type="InterPro" id="IPR005324">
    <property type="entry name" value="Ribosomal_uS5_C"/>
</dbReference>
<dbReference type="InterPro" id="IPR013810">
    <property type="entry name" value="Ribosomal_uS5_N"/>
</dbReference>
<dbReference type="InterPro" id="IPR018192">
    <property type="entry name" value="Ribosomal_uS5_N_CS"/>
</dbReference>
<dbReference type="InterPro" id="IPR014721">
    <property type="entry name" value="Ribsml_uS5_D2-typ_fold_subgr"/>
</dbReference>
<dbReference type="NCBIfam" id="TIGR01021">
    <property type="entry name" value="rpsE_bact"/>
    <property type="match status" value="1"/>
</dbReference>
<dbReference type="PANTHER" id="PTHR48277">
    <property type="entry name" value="MITOCHONDRIAL RIBOSOMAL PROTEIN S5"/>
    <property type="match status" value="1"/>
</dbReference>
<dbReference type="PANTHER" id="PTHR48277:SF1">
    <property type="entry name" value="MITOCHONDRIAL RIBOSOMAL PROTEIN S5"/>
    <property type="match status" value="1"/>
</dbReference>
<dbReference type="Pfam" id="PF00333">
    <property type="entry name" value="Ribosomal_S5"/>
    <property type="match status" value="1"/>
</dbReference>
<dbReference type="Pfam" id="PF03719">
    <property type="entry name" value="Ribosomal_S5_C"/>
    <property type="match status" value="1"/>
</dbReference>
<dbReference type="SUPFAM" id="SSF54768">
    <property type="entry name" value="dsRNA-binding domain-like"/>
    <property type="match status" value="1"/>
</dbReference>
<dbReference type="SUPFAM" id="SSF54211">
    <property type="entry name" value="Ribosomal protein S5 domain 2-like"/>
    <property type="match status" value="1"/>
</dbReference>
<dbReference type="PROSITE" id="PS00585">
    <property type="entry name" value="RIBOSOMAL_S5"/>
    <property type="match status" value="1"/>
</dbReference>
<dbReference type="PROSITE" id="PS50881">
    <property type="entry name" value="S5_DSRBD"/>
    <property type="match status" value="1"/>
</dbReference>
<reference key="1">
    <citation type="journal article" date="2007" name="PLoS Genet.">
        <title>Patterns and implications of gene gain and loss in the evolution of Prochlorococcus.</title>
        <authorList>
            <person name="Kettler G.C."/>
            <person name="Martiny A.C."/>
            <person name="Huang K."/>
            <person name="Zucker J."/>
            <person name="Coleman M.L."/>
            <person name="Rodrigue S."/>
            <person name="Chen F."/>
            <person name="Lapidus A."/>
            <person name="Ferriera S."/>
            <person name="Johnson J."/>
            <person name="Steglich C."/>
            <person name="Church G.M."/>
            <person name="Richardson P."/>
            <person name="Chisholm S.W."/>
        </authorList>
    </citation>
    <scope>NUCLEOTIDE SEQUENCE [LARGE SCALE GENOMIC DNA]</scope>
    <source>
        <strain>MIT 9303</strain>
    </source>
</reference>